<comment type="function">
    <text evidence="1">Catalyzes the NADPH-dependent reduction of L-glutamate 5-phosphate into L-glutamate 5-semialdehyde and phosphate. The product spontaneously undergoes cyclization to form 1-pyrroline-5-carboxylate.</text>
</comment>
<comment type="catalytic activity">
    <reaction evidence="1">
        <text>L-glutamate 5-semialdehyde + phosphate + NADP(+) = L-glutamyl 5-phosphate + NADPH + H(+)</text>
        <dbReference type="Rhea" id="RHEA:19541"/>
        <dbReference type="ChEBI" id="CHEBI:15378"/>
        <dbReference type="ChEBI" id="CHEBI:43474"/>
        <dbReference type="ChEBI" id="CHEBI:57783"/>
        <dbReference type="ChEBI" id="CHEBI:58066"/>
        <dbReference type="ChEBI" id="CHEBI:58274"/>
        <dbReference type="ChEBI" id="CHEBI:58349"/>
        <dbReference type="EC" id="1.2.1.41"/>
    </reaction>
</comment>
<comment type="pathway">
    <text evidence="1">Amino-acid biosynthesis; L-proline biosynthesis; L-glutamate 5-semialdehyde from L-glutamate: step 2/2.</text>
</comment>
<comment type="subcellular location">
    <subcellularLocation>
        <location evidence="1">Cytoplasm</location>
    </subcellularLocation>
</comment>
<comment type="similarity">
    <text evidence="1">Belongs to the gamma-glutamyl phosphate reductase family.</text>
</comment>
<proteinExistence type="inferred from homology"/>
<sequence>MNAPDSPNALAARSELTDLMQRMGSGAKVASAHMARASAAVKNWALSKLATLLRQNVKALDNANQRDLARAQAAGLAGPLLDRLRLSPKDIETVALGCEQLAAMPDVIGEIIGMKEQPSGIRVGQMRVPIGVFGMIYESRPNVTIEAASLAIKSGNACILRGGSEAIESNKALASLVQQALLDAGLPADAVQLVPTTDREAVGLLIAMPQYVDVIIPRGGKGLIERISREAKVPVIKHLDGNCHVYVDDPCDIDMAVRVADNAKTQKYSPCNASEGLLVARGVAAGFLPKIGAVYAAKGVEMRCDAEARALLAGVAGANLQPVSEQDWYEEYLAPIISIKVVAGIDEAIAHINQYSSHHTDAILTRDHMHAQRFLREVDSASVMVNASTRFADGFEFGLGAEIGISTDKFHARGPVGIEGLTSLKYVVLGNGEVRT</sequence>
<protein>
    <recommendedName>
        <fullName evidence="1">Gamma-glutamyl phosphate reductase</fullName>
        <shortName evidence="1">GPR</shortName>
        <ecNumber evidence="1">1.2.1.41</ecNumber>
    </recommendedName>
    <alternativeName>
        <fullName evidence="1">Glutamate-5-semialdehyde dehydrogenase</fullName>
    </alternativeName>
    <alternativeName>
        <fullName evidence="1">Glutamyl-gamma-semialdehyde dehydrogenase</fullName>
        <shortName evidence="1">GSA dehydrogenase</shortName>
    </alternativeName>
</protein>
<feature type="chain" id="PRO_0000340905" description="Gamma-glutamyl phosphate reductase">
    <location>
        <begin position="1"/>
        <end position="436"/>
    </location>
</feature>
<keyword id="KW-0028">Amino-acid biosynthesis</keyword>
<keyword id="KW-0963">Cytoplasm</keyword>
<keyword id="KW-0521">NADP</keyword>
<keyword id="KW-0560">Oxidoreductase</keyword>
<keyword id="KW-0641">Proline biosynthesis</keyword>
<keyword id="KW-1185">Reference proteome</keyword>
<dbReference type="EC" id="1.2.1.41" evidence="1"/>
<dbReference type="EMBL" id="CP000316">
    <property type="protein sequence ID" value="ABE46467.1"/>
    <property type="molecule type" value="Genomic_DNA"/>
</dbReference>
<dbReference type="RefSeq" id="WP_011485454.1">
    <property type="nucleotide sequence ID" value="NC_007948.1"/>
</dbReference>
<dbReference type="SMR" id="Q122S5"/>
<dbReference type="STRING" id="296591.Bpro_4584"/>
<dbReference type="KEGG" id="pol:Bpro_4584"/>
<dbReference type="eggNOG" id="COG0014">
    <property type="taxonomic scope" value="Bacteria"/>
</dbReference>
<dbReference type="HOGENOM" id="CLU_030231_0_0_4"/>
<dbReference type="OrthoDB" id="9809970at2"/>
<dbReference type="UniPathway" id="UPA00098">
    <property type="reaction ID" value="UER00360"/>
</dbReference>
<dbReference type="Proteomes" id="UP000001983">
    <property type="component" value="Chromosome"/>
</dbReference>
<dbReference type="GO" id="GO:0005737">
    <property type="term" value="C:cytoplasm"/>
    <property type="evidence" value="ECO:0007669"/>
    <property type="project" value="UniProtKB-SubCell"/>
</dbReference>
<dbReference type="GO" id="GO:0004350">
    <property type="term" value="F:glutamate-5-semialdehyde dehydrogenase activity"/>
    <property type="evidence" value="ECO:0007669"/>
    <property type="project" value="UniProtKB-UniRule"/>
</dbReference>
<dbReference type="GO" id="GO:0050661">
    <property type="term" value="F:NADP binding"/>
    <property type="evidence" value="ECO:0007669"/>
    <property type="project" value="InterPro"/>
</dbReference>
<dbReference type="GO" id="GO:0055129">
    <property type="term" value="P:L-proline biosynthetic process"/>
    <property type="evidence" value="ECO:0007669"/>
    <property type="project" value="UniProtKB-UniRule"/>
</dbReference>
<dbReference type="CDD" id="cd07079">
    <property type="entry name" value="ALDH_F18-19_ProA-GPR"/>
    <property type="match status" value="1"/>
</dbReference>
<dbReference type="FunFam" id="3.40.309.10:FF:000006">
    <property type="entry name" value="Gamma-glutamyl phosphate reductase"/>
    <property type="match status" value="1"/>
</dbReference>
<dbReference type="Gene3D" id="3.40.605.10">
    <property type="entry name" value="Aldehyde Dehydrogenase, Chain A, domain 1"/>
    <property type="match status" value="1"/>
</dbReference>
<dbReference type="Gene3D" id="3.40.309.10">
    <property type="entry name" value="Aldehyde Dehydrogenase, Chain A, domain 2"/>
    <property type="match status" value="1"/>
</dbReference>
<dbReference type="HAMAP" id="MF_00412">
    <property type="entry name" value="ProA"/>
    <property type="match status" value="1"/>
</dbReference>
<dbReference type="InterPro" id="IPR016161">
    <property type="entry name" value="Ald_DH/histidinol_DH"/>
</dbReference>
<dbReference type="InterPro" id="IPR016163">
    <property type="entry name" value="Ald_DH_C"/>
</dbReference>
<dbReference type="InterPro" id="IPR016162">
    <property type="entry name" value="Ald_DH_N"/>
</dbReference>
<dbReference type="InterPro" id="IPR015590">
    <property type="entry name" value="Aldehyde_DH_dom"/>
</dbReference>
<dbReference type="InterPro" id="IPR020593">
    <property type="entry name" value="G-glutamylP_reductase_CS"/>
</dbReference>
<dbReference type="InterPro" id="IPR012134">
    <property type="entry name" value="Glu-5-SA_DH"/>
</dbReference>
<dbReference type="InterPro" id="IPR000965">
    <property type="entry name" value="GPR_dom"/>
</dbReference>
<dbReference type="NCBIfam" id="NF001221">
    <property type="entry name" value="PRK00197.1"/>
    <property type="match status" value="1"/>
</dbReference>
<dbReference type="NCBIfam" id="TIGR00407">
    <property type="entry name" value="proA"/>
    <property type="match status" value="1"/>
</dbReference>
<dbReference type="PANTHER" id="PTHR11063:SF8">
    <property type="entry name" value="DELTA-1-PYRROLINE-5-CARBOXYLATE SYNTHASE"/>
    <property type="match status" value="1"/>
</dbReference>
<dbReference type="PANTHER" id="PTHR11063">
    <property type="entry name" value="GLUTAMATE SEMIALDEHYDE DEHYDROGENASE"/>
    <property type="match status" value="1"/>
</dbReference>
<dbReference type="Pfam" id="PF00171">
    <property type="entry name" value="Aldedh"/>
    <property type="match status" value="2"/>
</dbReference>
<dbReference type="PIRSF" id="PIRSF000151">
    <property type="entry name" value="GPR"/>
    <property type="match status" value="1"/>
</dbReference>
<dbReference type="SUPFAM" id="SSF53720">
    <property type="entry name" value="ALDH-like"/>
    <property type="match status" value="1"/>
</dbReference>
<dbReference type="PROSITE" id="PS01223">
    <property type="entry name" value="PROA"/>
    <property type="match status" value="1"/>
</dbReference>
<gene>
    <name evidence="1" type="primary">proA</name>
    <name type="ordered locus">Bpro_4584</name>
</gene>
<name>PROA_POLSJ</name>
<evidence type="ECO:0000255" key="1">
    <source>
        <dbReference type="HAMAP-Rule" id="MF_00412"/>
    </source>
</evidence>
<organism>
    <name type="scientific">Polaromonas sp. (strain JS666 / ATCC BAA-500)</name>
    <dbReference type="NCBI Taxonomy" id="296591"/>
    <lineage>
        <taxon>Bacteria</taxon>
        <taxon>Pseudomonadati</taxon>
        <taxon>Pseudomonadota</taxon>
        <taxon>Betaproteobacteria</taxon>
        <taxon>Burkholderiales</taxon>
        <taxon>Comamonadaceae</taxon>
        <taxon>Polaromonas</taxon>
    </lineage>
</organism>
<reference key="1">
    <citation type="journal article" date="2008" name="Appl. Environ. Microbiol.">
        <title>The genome of Polaromonas sp. strain JS666: insights into the evolution of a hydrocarbon- and xenobiotic-degrading bacterium, and features of relevance to biotechnology.</title>
        <authorList>
            <person name="Mattes T.E."/>
            <person name="Alexander A.K."/>
            <person name="Richardson P.M."/>
            <person name="Munk A.C."/>
            <person name="Han C.S."/>
            <person name="Stothard P."/>
            <person name="Coleman N.V."/>
        </authorList>
    </citation>
    <scope>NUCLEOTIDE SEQUENCE [LARGE SCALE GENOMIC DNA]</scope>
    <source>
        <strain>JS666 / ATCC BAA-500</strain>
    </source>
</reference>
<accession>Q122S5</accession>